<feature type="chain" id="PRO_0000050826" description="TraB domain-containing protein">
    <location>
        <begin position="1"/>
        <end position="376"/>
    </location>
</feature>
<feature type="modified residue" description="N-acetylmethionine" evidence="1">
    <location>
        <position position="1"/>
    </location>
</feature>
<feature type="modified residue" description="Phosphothreonine" evidence="1">
    <location>
        <position position="64"/>
    </location>
</feature>
<feature type="sequence conflict" description="In Ref. 1; BAB30908." evidence="2" ref="1">
    <original>L</original>
    <variation>R</variation>
    <location>
        <position position="273"/>
    </location>
</feature>
<feature type="sequence conflict" description="In Ref. 1." evidence="2" ref="1">
    <original>R</original>
    <variation>PPVGGPCKEETAPGGSALRRVGCSRGAGAARLGMSLGTDASKPPPMGA</variation>
    <location>
        <position position="376"/>
    </location>
</feature>
<proteinExistence type="evidence at protein level"/>
<organism>
    <name type="scientific">Mus musculus</name>
    <name type="common">Mouse</name>
    <dbReference type="NCBI Taxonomy" id="10090"/>
    <lineage>
        <taxon>Eukaryota</taxon>
        <taxon>Metazoa</taxon>
        <taxon>Chordata</taxon>
        <taxon>Craniata</taxon>
        <taxon>Vertebrata</taxon>
        <taxon>Euteleostomi</taxon>
        <taxon>Mammalia</taxon>
        <taxon>Eutheria</taxon>
        <taxon>Euarchontoglires</taxon>
        <taxon>Glires</taxon>
        <taxon>Rodentia</taxon>
        <taxon>Myomorpha</taxon>
        <taxon>Muroidea</taxon>
        <taxon>Muridae</taxon>
        <taxon>Murinae</taxon>
        <taxon>Mus</taxon>
        <taxon>Mus</taxon>
    </lineage>
</organism>
<name>TRABD_MOUSE</name>
<evidence type="ECO:0000250" key="1">
    <source>
        <dbReference type="UniProtKB" id="Q9H4I3"/>
    </source>
</evidence>
<evidence type="ECO:0000305" key="2"/>
<accession>Q99JY4</accession>
<accession>Q9CYF1</accession>
<keyword id="KW-0007">Acetylation</keyword>
<keyword id="KW-0597">Phosphoprotein</keyword>
<keyword id="KW-1185">Reference proteome</keyword>
<sequence length="376" mass="42189">MEGEEKPAQEADVEPVVTAGTSEAVPRVLAGDPQNISDVDAFNLLLEMKLKRRRERPNLPRTVTQLVAEDGSRVYVVGTAHFSDDSKRDVVKTIREVQPDVVVVELCQYRVSMLKMDERTLLREAKEVSLEKLQQAVRQNGLMSGLMQMLLLKVSAHITEQLGMAPGGEFREAFKEASKVPFCKFHLGDRPIPVTFKRAIAALSFWQKVKLAWGLCFLSDPISKDDVERCKQKDLLEQMMAEMIGEFPDLHRTIVSERDVYLTYMLRQAARRLELPRASDAEPRKCVPSVVVGVVGMGHVPGIEKNWSTDLNIQEIMTVPPPSISGRVSRVAVKAAFFGLLGYSLYWMGRRTLNLVLSLPAAQFCLQRVSEARPGR</sequence>
<reference key="1">
    <citation type="journal article" date="2005" name="Science">
        <title>The transcriptional landscape of the mammalian genome.</title>
        <authorList>
            <person name="Carninci P."/>
            <person name="Kasukawa T."/>
            <person name="Katayama S."/>
            <person name="Gough J."/>
            <person name="Frith M.C."/>
            <person name="Maeda N."/>
            <person name="Oyama R."/>
            <person name="Ravasi T."/>
            <person name="Lenhard B."/>
            <person name="Wells C."/>
            <person name="Kodzius R."/>
            <person name="Shimokawa K."/>
            <person name="Bajic V.B."/>
            <person name="Brenner S.E."/>
            <person name="Batalov S."/>
            <person name="Forrest A.R."/>
            <person name="Zavolan M."/>
            <person name="Davis M.J."/>
            <person name="Wilming L.G."/>
            <person name="Aidinis V."/>
            <person name="Allen J.E."/>
            <person name="Ambesi-Impiombato A."/>
            <person name="Apweiler R."/>
            <person name="Aturaliya R.N."/>
            <person name="Bailey T.L."/>
            <person name="Bansal M."/>
            <person name="Baxter L."/>
            <person name="Beisel K.W."/>
            <person name="Bersano T."/>
            <person name="Bono H."/>
            <person name="Chalk A.M."/>
            <person name="Chiu K.P."/>
            <person name="Choudhary V."/>
            <person name="Christoffels A."/>
            <person name="Clutterbuck D.R."/>
            <person name="Crowe M.L."/>
            <person name="Dalla E."/>
            <person name="Dalrymple B.P."/>
            <person name="de Bono B."/>
            <person name="Della Gatta G."/>
            <person name="di Bernardo D."/>
            <person name="Down T."/>
            <person name="Engstrom P."/>
            <person name="Fagiolini M."/>
            <person name="Faulkner G."/>
            <person name="Fletcher C.F."/>
            <person name="Fukushima T."/>
            <person name="Furuno M."/>
            <person name="Futaki S."/>
            <person name="Gariboldi M."/>
            <person name="Georgii-Hemming P."/>
            <person name="Gingeras T.R."/>
            <person name="Gojobori T."/>
            <person name="Green R.E."/>
            <person name="Gustincich S."/>
            <person name="Harbers M."/>
            <person name="Hayashi Y."/>
            <person name="Hensch T.K."/>
            <person name="Hirokawa N."/>
            <person name="Hill D."/>
            <person name="Huminiecki L."/>
            <person name="Iacono M."/>
            <person name="Ikeo K."/>
            <person name="Iwama A."/>
            <person name="Ishikawa T."/>
            <person name="Jakt M."/>
            <person name="Kanapin A."/>
            <person name="Katoh M."/>
            <person name="Kawasawa Y."/>
            <person name="Kelso J."/>
            <person name="Kitamura H."/>
            <person name="Kitano H."/>
            <person name="Kollias G."/>
            <person name="Krishnan S.P."/>
            <person name="Kruger A."/>
            <person name="Kummerfeld S.K."/>
            <person name="Kurochkin I.V."/>
            <person name="Lareau L.F."/>
            <person name="Lazarevic D."/>
            <person name="Lipovich L."/>
            <person name="Liu J."/>
            <person name="Liuni S."/>
            <person name="McWilliam S."/>
            <person name="Madan Babu M."/>
            <person name="Madera M."/>
            <person name="Marchionni L."/>
            <person name="Matsuda H."/>
            <person name="Matsuzawa S."/>
            <person name="Miki H."/>
            <person name="Mignone F."/>
            <person name="Miyake S."/>
            <person name="Morris K."/>
            <person name="Mottagui-Tabar S."/>
            <person name="Mulder N."/>
            <person name="Nakano N."/>
            <person name="Nakauchi H."/>
            <person name="Ng P."/>
            <person name="Nilsson R."/>
            <person name="Nishiguchi S."/>
            <person name="Nishikawa S."/>
            <person name="Nori F."/>
            <person name="Ohara O."/>
            <person name="Okazaki Y."/>
            <person name="Orlando V."/>
            <person name="Pang K.C."/>
            <person name="Pavan W.J."/>
            <person name="Pavesi G."/>
            <person name="Pesole G."/>
            <person name="Petrovsky N."/>
            <person name="Piazza S."/>
            <person name="Reed J."/>
            <person name="Reid J.F."/>
            <person name="Ring B.Z."/>
            <person name="Ringwald M."/>
            <person name="Rost B."/>
            <person name="Ruan Y."/>
            <person name="Salzberg S.L."/>
            <person name="Sandelin A."/>
            <person name="Schneider C."/>
            <person name="Schoenbach C."/>
            <person name="Sekiguchi K."/>
            <person name="Semple C.A."/>
            <person name="Seno S."/>
            <person name="Sessa L."/>
            <person name="Sheng Y."/>
            <person name="Shibata Y."/>
            <person name="Shimada H."/>
            <person name="Shimada K."/>
            <person name="Silva D."/>
            <person name="Sinclair B."/>
            <person name="Sperling S."/>
            <person name="Stupka E."/>
            <person name="Sugiura K."/>
            <person name="Sultana R."/>
            <person name="Takenaka Y."/>
            <person name="Taki K."/>
            <person name="Tammoja K."/>
            <person name="Tan S.L."/>
            <person name="Tang S."/>
            <person name="Taylor M.S."/>
            <person name="Tegner J."/>
            <person name="Teichmann S.A."/>
            <person name="Ueda H.R."/>
            <person name="van Nimwegen E."/>
            <person name="Verardo R."/>
            <person name="Wei C.L."/>
            <person name="Yagi K."/>
            <person name="Yamanishi H."/>
            <person name="Zabarovsky E."/>
            <person name="Zhu S."/>
            <person name="Zimmer A."/>
            <person name="Hide W."/>
            <person name="Bult C."/>
            <person name="Grimmond S.M."/>
            <person name="Teasdale R.D."/>
            <person name="Liu E.T."/>
            <person name="Brusic V."/>
            <person name="Quackenbush J."/>
            <person name="Wahlestedt C."/>
            <person name="Mattick J.S."/>
            <person name="Hume D.A."/>
            <person name="Kai C."/>
            <person name="Sasaki D."/>
            <person name="Tomaru Y."/>
            <person name="Fukuda S."/>
            <person name="Kanamori-Katayama M."/>
            <person name="Suzuki M."/>
            <person name="Aoki J."/>
            <person name="Arakawa T."/>
            <person name="Iida J."/>
            <person name="Imamura K."/>
            <person name="Itoh M."/>
            <person name="Kato T."/>
            <person name="Kawaji H."/>
            <person name="Kawagashira N."/>
            <person name="Kawashima T."/>
            <person name="Kojima M."/>
            <person name="Kondo S."/>
            <person name="Konno H."/>
            <person name="Nakano K."/>
            <person name="Ninomiya N."/>
            <person name="Nishio T."/>
            <person name="Okada M."/>
            <person name="Plessy C."/>
            <person name="Shibata K."/>
            <person name="Shiraki T."/>
            <person name="Suzuki S."/>
            <person name="Tagami M."/>
            <person name="Waki K."/>
            <person name="Watahiki A."/>
            <person name="Okamura-Oho Y."/>
            <person name="Suzuki H."/>
            <person name="Kawai J."/>
            <person name="Hayashizaki Y."/>
        </authorList>
    </citation>
    <scope>NUCLEOTIDE SEQUENCE [LARGE SCALE MRNA]</scope>
    <source>
        <strain>C57BL/6J</strain>
        <tissue>Embryo</tissue>
    </source>
</reference>
<reference key="2">
    <citation type="journal article" date="2004" name="Genome Res.">
        <title>The status, quality, and expansion of the NIH full-length cDNA project: the Mammalian Gene Collection (MGC).</title>
        <authorList>
            <consortium name="The MGC Project Team"/>
        </authorList>
    </citation>
    <scope>NUCLEOTIDE SEQUENCE [LARGE SCALE MRNA]</scope>
    <source>
        <tissue>Mammary gland</tissue>
    </source>
</reference>
<reference key="3">
    <citation type="journal article" date="2010" name="Cell">
        <title>A tissue-specific atlas of mouse protein phosphorylation and expression.</title>
        <authorList>
            <person name="Huttlin E.L."/>
            <person name="Jedrychowski M.P."/>
            <person name="Elias J.E."/>
            <person name="Goswami T."/>
            <person name="Rad R."/>
            <person name="Beausoleil S.A."/>
            <person name="Villen J."/>
            <person name="Haas W."/>
            <person name="Sowa M.E."/>
            <person name="Gygi S.P."/>
        </authorList>
    </citation>
    <scope>IDENTIFICATION BY MASS SPECTROMETRY [LARGE SCALE ANALYSIS]</scope>
    <source>
        <tissue>Brain</tissue>
        <tissue>Heart</tissue>
        <tissue>Liver</tissue>
        <tissue>Lung</tissue>
        <tissue>Pancreas</tissue>
        <tissue>Spleen</tissue>
    </source>
</reference>
<gene>
    <name type="primary">Trabd</name>
</gene>
<protein>
    <recommendedName>
        <fullName>TraB domain-containing protein</fullName>
    </recommendedName>
</protein>
<dbReference type="EMBL" id="AK017745">
    <property type="protein sequence ID" value="BAB30908.1"/>
    <property type="molecule type" value="mRNA"/>
</dbReference>
<dbReference type="EMBL" id="BC005574">
    <property type="protein sequence ID" value="AAH05574.1"/>
    <property type="molecule type" value="mRNA"/>
</dbReference>
<dbReference type="CCDS" id="CCDS49696.1"/>
<dbReference type="RefSeq" id="NP_001365685.1">
    <property type="nucleotide sequence ID" value="NM_001378756.1"/>
</dbReference>
<dbReference type="RefSeq" id="NP_080761.2">
    <property type="nucleotide sequence ID" value="NM_026485.2"/>
</dbReference>
<dbReference type="RefSeq" id="XP_006521371.1">
    <property type="nucleotide sequence ID" value="XM_006521308.3"/>
</dbReference>
<dbReference type="SMR" id="Q99JY4"/>
<dbReference type="BioGRID" id="212576">
    <property type="interactions" value="1"/>
</dbReference>
<dbReference type="FunCoup" id="Q99JY4">
    <property type="interactions" value="59"/>
</dbReference>
<dbReference type="STRING" id="10090.ENSMUSP00000080403"/>
<dbReference type="GlyGen" id="Q99JY4">
    <property type="glycosylation" value="1 site, 1 O-linked glycan (1 site)"/>
</dbReference>
<dbReference type="iPTMnet" id="Q99JY4"/>
<dbReference type="PhosphoSitePlus" id="Q99JY4"/>
<dbReference type="SwissPalm" id="Q99JY4"/>
<dbReference type="jPOST" id="Q99JY4"/>
<dbReference type="PaxDb" id="10090-ENSMUSP00000080403"/>
<dbReference type="ProteomicsDB" id="260733"/>
<dbReference type="Pumba" id="Q99JY4"/>
<dbReference type="Antibodypedia" id="14181">
    <property type="antibodies" value="47 antibodies from 15 providers"/>
</dbReference>
<dbReference type="Ensembl" id="ENSMUST00000081702.12">
    <property type="protein sequence ID" value="ENSMUSP00000080403.6"/>
    <property type="gene ID" value="ENSMUSG00000015363.14"/>
</dbReference>
<dbReference type="Ensembl" id="ENSMUST00000165690.2">
    <property type="protein sequence ID" value="ENSMUSP00000131228.2"/>
    <property type="gene ID" value="ENSMUSG00000015363.14"/>
</dbReference>
<dbReference type="GeneID" id="67976"/>
<dbReference type="KEGG" id="mmu:67976"/>
<dbReference type="UCSC" id="uc007xfc.1">
    <property type="organism name" value="mouse"/>
</dbReference>
<dbReference type="AGR" id="MGI:1915226"/>
<dbReference type="CTD" id="80305"/>
<dbReference type="MGI" id="MGI:1915226">
    <property type="gene designation" value="Trabd"/>
</dbReference>
<dbReference type="VEuPathDB" id="HostDB:ENSMUSG00000015363"/>
<dbReference type="eggNOG" id="KOG2860">
    <property type="taxonomic scope" value="Eukaryota"/>
</dbReference>
<dbReference type="GeneTree" id="ENSGT00390000009067"/>
<dbReference type="HOGENOM" id="CLU_034593_0_1_1"/>
<dbReference type="InParanoid" id="Q99JY4"/>
<dbReference type="OMA" id="MEKMMTT"/>
<dbReference type="OrthoDB" id="48306at2759"/>
<dbReference type="PhylomeDB" id="Q99JY4"/>
<dbReference type="TreeFam" id="TF314184"/>
<dbReference type="BioGRID-ORCS" id="67976">
    <property type="hits" value="0 hits in 76 CRISPR screens"/>
</dbReference>
<dbReference type="ChiTaRS" id="Trabd">
    <property type="organism name" value="mouse"/>
</dbReference>
<dbReference type="PRO" id="PR:Q99JY4"/>
<dbReference type="Proteomes" id="UP000000589">
    <property type="component" value="Chromosome 15"/>
</dbReference>
<dbReference type="RNAct" id="Q99JY4">
    <property type="molecule type" value="protein"/>
</dbReference>
<dbReference type="Bgee" id="ENSMUSG00000015363">
    <property type="expression patterns" value="Expressed in lacrimal gland and 235 other cell types or tissues"/>
</dbReference>
<dbReference type="ExpressionAtlas" id="Q99JY4">
    <property type="expression patterns" value="baseline and differential"/>
</dbReference>
<dbReference type="GO" id="GO:0005741">
    <property type="term" value="C:mitochondrial outer membrane"/>
    <property type="evidence" value="ECO:0007669"/>
    <property type="project" value="Ensembl"/>
</dbReference>
<dbReference type="GO" id="GO:0160204">
    <property type="term" value="F:mitochondrion-mitochondrion outer membrane tether activity"/>
    <property type="evidence" value="ECO:0007669"/>
    <property type="project" value="Ensembl"/>
</dbReference>
<dbReference type="GO" id="GO:0008053">
    <property type="term" value="P:mitochondrial fusion"/>
    <property type="evidence" value="ECO:0007669"/>
    <property type="project" value="Ensembl"/>
</dbReference>
<dbReference type="CDD" id="cd14726">
    <property type="entry name" value="TraB_PrgY-like"/>
    <property type="match status" value="1"/>
</dbReference>
<dbReference type="InterPro" id="IPR002816">
    <property type="entry name" value="TraB/PrgY/GumN_fam"/>
</dbReference>
<dbReference type="InterPro" id="IPR046345">
    <property type="entry name" value="TraB_PrgY-like"/>
</dbReference>
<dbReference type="PANTHER" id="PTHR21530">
    <property type="entry name" value="PHEROMONE SHUTDOWN PROTEIN"/>
    <property type="match status" value="1"/>
</dbReference>
<dbReference type="PANTHER" id="PTHR21530:SF7">
    <property type="entry name" value="TRAB DOMAIN-CONTAINING PROTEIN"/>
    <property type="match status" value="1"/>
</dbReference>
<dbReference type="Pfam" id="PF01963">
    <property type="entry name" value="TraB_PrgY_gumN"/>
    <property type="match status" value="1"/>
</dbReference>